<keyword id="KW-0027">Amidation</keyword>
<keyword id="KW-0878">Amphibian defense peptide</keyword>
<keyword id="KW-0044">Antibiotic</keyword>
<keyword id="KW-0929">Antimicrobial</keyword>
<keyword id="KW-0165">Cleavage on pair of basic residues</keyword>
<keyword id="KW-0204">Cytolysis</keyword>
<keyword id="KW-0903">Direct protein sequencing</keyword>
<keyword id="KW-0354">Hemolysis</keyword>
<keyword id="KW-0964">Secreted</keyword>
<keyword id="KW-0732">Signal</keyword>
<accession>P82286</accession>
<organism>
    <name type="scientific">Bombina variegata</name>
    <name type="common">Yellow-bellied toad</name>
    <dbReference type="NCBI Taxonomy" id="8348"/>
    <lineage>
        <taxon>Eukaryota</taxon>
        <taxon>Metazoa</taxon>
        <taxon>Chordata</taxon>
        <taxon>Craniata</taxon>
        <taxon>Vertebrata</taxon>
        <taxon>Euteleostomi</taxon>
        <taxon>Amphibia</taxon>
        <taxon>Batrachia</taxon>
        <taxon>Anura</taxon>
        <taxon>Bombinatoridae</taxon>
        <taxon>Bombina</taxon>
    </lineage>
</organism>
<sequence length="137" mass="15035">MNFKYIVAVSILIASAYARREENNIQSLSQRDVLEEESLREIRGIGASILSAGKSALKGFAKGLAEHFANGKRTAEDHEMMKRLEAAVRDLDSLEHPEEASEKETRGFNQEEKEKRIIGPVLGLVGSALGGLLKKIG</sequence>
<evidence type="ECO:0000255" key="1"/>
<evidence type="ECO:0000256" key="2">
    <source>
        <dbReference type="SAM" id="MobiDB-lite"/>
    </source>
</evidence>
<evidence type="ECO:0000269" key="3">
    <source>
    </source>
</evidence>
<evidence type="ECO:0000269" key="4">
    <source>
    </source>
</evidence>
<evidence type="ECO:0000305" key="5"/>
<name>BMNL2_BOMVA</name>
<reference key="1">
    <citation type="journal article" date="1998" name="Biopolymers">
        <title>Antimicrobial peptides from amphibian skin: what do they tell us?</title>
        <authorList>
            <person name="Simmaco M."/>
            <person name="Mignogna G."/>
            <person name="Barra D."/>
        </authorList>
    </citation>
    <scope>NUCLEOTIDE SEQUENCE [MRNA]</scope>
    <scope>AMIDATION AT ASN-70</scope>
    <scope>PROTEIN SEQUENCE OF 117-136</scope>
    <source>
        <tissue>Skin</tissue>
        <tissue>Skin secretion</tissue>
    </source>
</reference>
<reference key="2">
    <citation type="journal article" date="1993" name="EMBO J.">
        <title>Antibacterial and haemolytic peptides containing D-alloisoleucine from the skin of Bombina variegata.</title>
        <authorList>
            <person name="Mignogna G."/>
            <person name="Simmaco M."/>
            <person name="Kreil G."/>
            <person name="Barra D."/>
        </authorList>
    </citation>
    <scope>PROTEIN SEQUENCE OF 117-136</scope>
    <scope>AMIDATION AT ILE-136</scope>
    <source>
        <tissue>Skin secretion</tissue>
    </source>
</reference>
<proteinExistence type="evidence at protein level"/>
<dbReference type="EMBL" id="AJ251565">
    <property type="protein sequence ID" value="CAB61443.1"/>
    <property type="molecule type" value="mRNA"/>
</dbReference>
<dbReference type="BMRB" id="P82286"/>
<dbReference type="SMR" id="P82286"/>
<dbReference type="GO" id="GO:0005576">
    <property type="term" value="C:extracellular region"/>
    <property type="evidence" value="ECO:0007669"/>
    <property type="project" value="UniProtKB-SubCell"/>
</dbReference>
<dbReference type="GO" id="GO:0042742">
    <property type="term" value="P:defense response to bacterium"/>
    <property type="evidence" value="ECO:0007669"/>
    <property type="project" value="UniProtKB-KW"/>
</dbReference>
<dbReference type="GO" id="GO:0031640">
    <property type="term" value="P:killing of cells of another organism"/>
    <property type="evidence" value="ECO:0007669"/>
    <property type="project" value="UniProtKB-KW"/>
</dbReference>
<dbReference type="InterPro" id="IPR007962">
    <property type="entry name" value="Bombinin"/>
</dbReference>
<dbReference type="Pfam" id="PF05298">
    <property type="entry name" value="Bombinin"/>
    <property type="match status" value="1"/>
</dbReference>
<comment type="function">
    <text>Bombinin-like peptide 2 has antimicrobial activity, but no hemolytic activity. Preliminary evidence indicates that this peptide does not lyse and thus kill the bacteria by its antimicrobial activity.</text>
</comment>
<comment type="function">
    <text>Bombinin H2 has antibacterial and hemolytic activity.</text>
</comment>
<comment type="subcellular location">
    <subcellularLocation>
        <location>Secreted</location>
    </subcellularLocation>
</comment>
<comment type="tissue specificity">
    <text>Expressed by the skin glands.</text>
</comment>
<comment type="similarity">
    <text evidence="5">Belongs to the bombinin family.</text>
</comment>
<feature type="signal peptide" evidence="1">
    <location>
        <begin position="1"/>
        <end position="18"/>
    </location>
</feature>
<feature type="peptide" id="PRO_0000003072" description="Acidic peptide 2-1" evidence="1">
    <location>
        <begin position="19"/>
        <end position="43"/>
    </location>
</feature>
<feature type="peptide" id="PRO_0000003073" description="Bombinin-like peptide 2">
    <location>
        <begin position="44"/>
        <end position="70"/>
    </location>
</feature>
<feature type="peptide" id="PRO_0000003074" description="Octapeptide 2" evidence="1">
    <location>
        <begin position="74"/>
        <end position="81"/>
    </location>
</feature>
<feature type="peptide" id="PRO_0000003075" description="Acidic peptide 2-2" evidence="1">
    <location>
        <begin position="84"/>
        <end position="114"/>
    </location>
</feature>
<feature type="peptide" id="PRO_0000003076" description="Bombinin-H2">
    <location>
        <begin position="117"/>
        <end position="136"/>
    </location>
</feature>
<feature type="region of interest" description="Disordered" evidence="2">
    <location>
        <begin position="92"/>
        <end position="112"/>
    </location>
</feature>
<feature type="modified residue" description="Asparagine amide" evidence="3">
    <location>
        <position position="70"/>
    </location>
</feature>
<feature type="modified residue" description="Isoleucine amide" evidence="4">
    <location>
        <position position="136"/>
    </location>
</feature>
<protein>
    <recommendedName>
        <fullName>Bombinin-like peptides 2</fullName>
    </recommendedName>
    <component>
        <recommendedName>
            <fullName>Acidic peptide 2-1</fullName>
        </recommendedName>
    </component>
    <component>
        <recommendedName>
            <fullName>Bombinin-like peptide 2</fullName>
            <shortName>BLP-2</shortName>
        </recommendedName>
    </component>
    <component>
        <recommendedName>
            <fullName>Octapeptide 2</fullName>
        </recommendedName>
    </component>
    <component>
        <recommendedName>
            <fullName>Acidic peptide 2-2</fullName>
        </recommendedName>
    </component>
    <component>
        <recommendedName>
            <fullName>Bombinin-H2</fullName>
        </recommendedName>
    </component>
</protein>